<organism>
    <name type="scientific">Homo sapiens</name>
    <name type="common">Human</name>
    <dbReference type="NCBI Taxonomy" id="9606"/>
    <lineage>
        <taxon>Eukaryota</taxon>
        <taxon>Metazoa</taxon>
        <taxon>Chordata</taxon>
        <taxon>Craniata</taxon>
        <taxon>Vertebrata</taxon>
        <taxon>Euteleostomi</taxon>
        <taxon>Mammalia</taxon>
        <taxon>Eutheria</taxon>
        <taxon>Euarchontoglires</taxon>
        <taxon>Primates</taxon>
        <taxon>Haplorrhini</taxon>
        <taxon>Catarrhini</taxon>
        <taxon>Hominidae</taxon>
        <taxon>Homo</taxon>
    </lineage>
</organism>
<dbReference type="EMBL" id="AB015320">
    <property type="protein sequence ID" value="BAA33392.1"/>
    <property type="molecule type" value="mRNA"/>
</dbReference>
<dbReference type="EMBL" id="AF251295">
    <property type="protein sequence ID" value="AAG44595.1"/>
    <property type="status" value="ALT_INIT"/>
    <property type="molecule type" value="mRNA"/>
</dbReference>
<dbReference type="EMBL" id="BT006738">
    <property type="protein sequence ID" value="AAP35384.1"/>
    <property type="molecule type" value="mRNA"/>
</dbReference>
<dbReference type="EMBL" id="AK299921">
    <property type="protein sequence ID" value="BAG61756.1"/>
    <property type="molecule type" value="mRNA"/>
</dbReference>
<dbReference type="EMBL" id="AC004106">
    <property type="status" value="NOT_ANNOTATED_CDS"/>
    <property type="molecule type" value="Genomic_DNA"/>
</dbReference>
<dbReference type="EMBL" id="BC001117">
    <property type="protein sequence ID" value="AAH01117.1"/>
    <property type="molecule type" value="mRNA"/>
</dbReference>
<dbReference type="EMBL" id="BC071867">
    <property type="protein sequence ID" value="AAH71867.1"/>
    <property type="molecule type" value="mRNA"/>
</dbReference>
<dbReference type="EMBL" id="AF091077">
    <property type="protein sequence ID" value="AAC72946.1"/>
    <property type="molecule type" value="mRNA"/>
</dbReference>
<dbReference type="CCDS" id="CCDS14173.1">
    <molecule id="P56377-1"/>
</dbReference>
<dbReference type="RefSeq" id="NP_003907.3">
    <molecule id="P56377-1"/>
    <property type="nucleotide sequence ID" value="NM_003916.4"/>
</dbReference>
<dbReference type="RefSeq" id="XP_011543901.1">
    <property type="nucleotide sequence ID" value="XM_011545599.1"/>
</dbReference>
<dbReference type="RefSeq" id="XP_016885414.1">
    <property type="nucleotide sequence ID" value="XM_017029925.1"/>
</dbReference>
<dbReference type="RefSeq" id="XP_047298562.1">
    <molecule id="P56377-2"/>
    <property type="nucleotide sequence ID" value="XM_047442606.1"/>
</dbReference>
<dbReference type="RefSeq" id="XP_054184022.1">
    <molecule id="P56377-2"/>
    <property type="nucleotide sequence ID" value="XM_054328047.1"/>
</dbReference>
<dbReference type="SMR" id="P56377"/>
<dbReference type="BioGRID" id="114419">
    <property type="interactions" value="54"/>
</dbReference>
<dbReference type="ComplexPortal" id="CPX-5048">
    <property type="entry name" value="Ubiquitous AP-1 Adaptor complex, sigma1b variant"/>
</dbReference>
<dbReference type="CORUM" id="P56377"/>
<dbReference type="FunCoup" id="P56377">
    <property type="interactions" value="2268"/>
</dbReference>
<dbReference type="IntAct" id="P56377">
    <property type="interactions" value="42"/>
</dbReference>
<dbReference type="STRING" id="9606.ENSP00000500695"/>
<dbReference type="iPTMnet" id="P56377"/>
<dbReference type="PhosphoSitePlus" id="P56377"/>
<dbReference type="BioMuta" id="AP1S2"/>
<dbReference type="DMDM" id="3023308"/>
<dbReference type="CPTAC" id="CPTAC-1534"/>
<dbReference type="CPTAC" id="CPTAC-1535"/>
<dbReference type="jPOST" id="P56377"/>
<dbReference type="MassIVE" id="P56377"/>
<dbReference type="PaxDb" id="9606-ENSP00000444957"/>
<dbReference type="PeptideAtlas" id="P56377"/>
<dbReference type="ProteomicsDB" id="5052"/>
<dbReference type="ProteomicsDB" id="56915">
    <molecule id="P56377-1"/>
</dbReference>
<dbReference type="Pumba" id="P56377"/>
<dbReference type="Antibodypedia" id="23979">
    <property type="antibodies" value="69 antibodies from 22 providers"/>
</dbReference>
<dbReference type="DNASU" id="8905"/>
<dbReference type="Ensembl" id="ENST00000329235.6">
    <molecule id="P56377-1"/>
    <property type="protein sequence ID" value="ENSP00000328789.2"/>
    <property type="gene ID" value="ENSG00000182287.15"/>
</dbReference>
<dbReference type="GeneID" id="8905"/>
<dbReference type="KEGG" id="hsa:8905"/>
<dbReference type="AGR" id="HGNC:560"/>
<dbReference type="CTD" id="8905"/>
<dbReference type="DisGeNET" id="8905"/>
<dbReference type="GeneCards" id="AP1S2"/>
<dbReference type="HGNC" id="HGNC:560">
    <property type="gene designation" value="AP1S2"/>
</dbReference>
<dbReference type="HPA" id="ENSG00000182287">
    <property type="expression patterns" value="Tissue enriched (epididymis)"/>
</dbReference>
<dbReference type="MalaCards" id="AP1S2"/>
<dbReference type="MIM" id="300629">
    <property type="type" value="gene"/>
</dbReference>
<dbReference type="MIM" id="304340">
    <property type="type" value="phenotype"/>
</dbReference>
<dbReference type="neXtProt" id="NX_P56377"/>
<dbReference type="OpenTargets" id="ENSG00000182287"/>
<dbReference type="Orphanet" id="85335">
    <property type="disease" value="Fried syndrome"/>
</dbReference>
<dbReference type="Orphanet" id="1568">
    <property type="disease" value="X-linked intellectual disability-Dandy-Walker malformation-basal ganglia disease-seizures syndrome"/>
</dbReference>
<dbReference type="Orphanet" id="85329">
    <property type="disease" value="X-linked intellectual disability-hypotonia-facial dysmorphism-aggressive behavior syndrome"/>
</dbReference>
<dbReference type="PharmGKB" id="PA24851"/>
<dbReference type="VEuPathDB" id="HostDB:ENSG00000182287"/>
<dbReference type="eggNOG" id="KOG0934">
    <property type="taxonomic scope" value="Eukaryota"/>
</dbReference>
<dbReference type="GeneTree" id="ENSGT00970000193372"/>
<dbReference type="InParanoid" id="P56377"/>
<dbReference type="OrthoDB" id="371463at2759"/>
<dbReference type="PAN-GO" id="P56377">
    <property type="GO annotations" value="2 GO annotations based on evolutionary models"/>
</dbReference>
<dbReference type="PhylomeDB" id="P56377"/>
<dbReference type="TreeFam" id="TF312921"/>
<dbReference type="PathwayCommons" id="P56377"/>
<dbReference type="Reactome" id="R-HSA-164940">
    <property type="pathway name" value="Nef mediated downregulation of MHC class I complex cell surface expression"/>
</dbReference>
<dbReference type="Reactome" id="R-HSA-2132295">
    <property type="pathway name" value="MHC class II antigen presentation"/>
</dbReference>
<dbReference type="Reactome" id="R-HSA-432720">
    <property type="pathway name" value="Lysosome Vesicle Biogenesis"/>
</dbReference>
<dbReference type="Reactome" id="R-HSA-432722">
    <property type="pathway name" value="Golgi Associated Vesicle Biogenesis"/>
</dbReference>
<dbReference type="SignaLink" id="P56377"/>
<dbReference type="BioGRID-ORCS" id="8905">
    <property type="hits" value="149 hits in 767 CRISPR screens"/>
</dbReference>
<dbReference type="ChiTaRS" id="AP1S2">
    <property type="organism name" value="human"/>
</dbReference>
<dbReference type="GeneWiki" id="AP1S2"/>
<dbReference type="GenomeRNAi" id="8905"/>
<dbReference type="Pharos" id="P56377">
    <property type="development level" value="Tbio"/>
</dbReference>
<dbReference type="PRO" id="PR:P56377"/>
<dbReference type="Proteomes" id="UP000005640">
    <property type="component" value="Chromosome X"/>
</dbReference>
<dbReference type="RNAct" id="P56377">
    <property type="molecule type" value="protein"/>
</dbReference>
<dbReference type="Bgee" id="ENSG00000182287">
    <property type="expression patterns" value="Expressed in corpus epididymis and 207 other cell types or tissues"/>
</dbReference>
<dbReference type="ExpressionAtlas" id="P56377">
    <property type="expression patterns" value="baseline and differential"/>
</dbReference>
<dbReference type="GO" id="GO:0030121">
    <property type="term" value="C:AP-1 adaptor complex"/>
    <property type="evidence" value="ECO:0000303"/>
    <property type="project" value="ComplexPortal"/>
</dbReference>
<dbReference type="GO" id="GO:0030119">
    <property type="term" value="C:AP-type membrane coat adaptor complex"/>
    <property type="evidence" value="ECO:0000304"/>
    <property type="project" value="ProtInc"/>
</dbReference>
<dbReference type="GO" id="GO:0005905">
    <property type="term" value="C:clathrin-coated pit"/>
    <property type="evidence" value="ECO:0007669"/>
    <property type="project" value="UniProtKB-SubCell"/>
</dbReference>
<dbReference type="GO" id="GO:0030659">
    <property type="term" value="C:cytoplasmic vesicle membrane"/>
    <property type="evidence" value="ECO:0000304"/>
    <property type="project" value="Reactome"/>
</dbReference>
<dbReference type="GO" id="GO:0005829">
    <property type="term" value="C:cytosol"/>
    <property type="evidence" value="ECO:0000304"/>
    <property type="project" value="Reactome"/>
</dbReference>
<dbReference type="GO" id="GO:0005769">
    <property type="term" value="C:early endosome"/>
    <property type="evidence" value="ECO:0000303"/>
    <property type="project" value="ComplexPortal"/>
</dbReference>
<dbReference type="GO" id="GO:0005794">
    <property type="term" value="C:Golgi apparatus"/>
    <property type="evidence" value="ECO:0000314"/>
    <property type="project" value="HPA"/>
</dbReference>
<dbReference type="GO" id="GO:0000139">
    <property type="term" value="C:Golgi membrane"/>
    <property type="evidence" value="ECO:0000304"/>
    <property type="project" value="Reactome"/>
</dbReference>
<dbReference type="GO" id="GO:0043231">
    <property type="term" value="C:intracellular membrane-bounded organelle"/>
    <property type="evidence" value="ECO:0000314"/>
    <property type="project" value="HPA"/>
</dbReference>
<dbReference type="GO" id="GO:0005765">
    <property type="term" value="C:lysosomal membrane"/>
    <property type="evidence" value="ECO:0000304"/>
    <property type="project" value="Reactome"/>
</dbReference>
<dbReference type="GO" id="GO:0032588">
    <property type="term" value="C:trans-Golgi network membrane"/>
    <property type="evidence" value="ECO:0000304"/>
    <property type="project" value="Reactome"/>
</dbReference>
<dbReference type="GO" id="GO:0035615">
    <property type="term" value="F:clathrin adaptor activity"/>
    <property type="evidence" value="ECO:0007669"/>
    <property type="project" value="InterPro"/>
</dbReference>
<dbReference type="GO" id="GO:0006886">
    <property type="term" value="P:intracellular protein transport"/>
    <property type="evidence" value="ECO:0007669"/>
    <property type="project" value="InterPro"/>
</dbReference>
<dbReference type="GO" id="GO:1903232">
    <property type="term" value="P:melanosome assembly"/>
    <property type="evidence" value="ECO:0000303"/>
    <property type="project" value="ComplexPortal"/>
</dbReference>
<dbReference type="GO" id="GO:0060155">
    <property type="term" value="P:platelet dense granule organization"/>
    <property type="evidence" value="ECO:0000303"/>
    <property type="project" value="ComplexPortal"/>
</dbReference>
<dbReference type="GO" id="GO:0016192">
    <property type="term" value="P:vesicle-mediated transport"/>
    <property type="evidence" value="ECO:0000318"/>
    <property type="project" value="GO_Central"/>
</dbReference>
<dbReference type="CDD" id="cd14831">
    <property type="entry name" value="AP1_sigma"/>
    <property type="match status" value="1"/>
</dbReference>
<dbReference type="FunFam" id="3.30.450.60:FF:000009">
    <property type="entry name" value="AP complex subunit sigma"/>
    <property type="match status" value="1"/>
</dbReference>
<dbReference type="Gene3D" id="3.30.450.60">
    <property type="match status" value="1"/>
</dbReference>
<dbReference type="InterPro" id="IPR044733">
    <property type="entry name" value="AP1_sigma"/>
</dbReference>
<dbReference type="InterPro" id="IPR016635">
    <property type="entry name" value="AP_complex_ssu"/>
</dbReference>
<dbReference type="InterPro" id="IPR022775">
    <property type="entry name" value="AP_mu_sigma_su"/>
</dbReference>
<dbReference type="InterPro" id="IPR000804">
    <property type="entry name" value="Clathrin_sm-chain_CS"/>
</dbReference>
<dbReference type="InterPro" id="IPR011012">
    <property type="entry name" value="Longin-like_dom_sf"/>
</dbReference>
<dbReference type="PANTHER" id="PTHR11753">
    <property type="entry name" value="ADAPTOR COMPLEXES SMALL SUBUNIT FAMILY"/>
    <property type="match status" value="1"/>
</dbReference>
<dbReference type="Pfam" id="PF01217">
    <property type="entry name" value="Clat_adaptor_s"/>
    <property type="match status" value="1"/>
</dbReference>
<dbReference type="PIRSF" id="PIRSF015588">
    <property type="entry name" value="AP_complex_sigma"/>
    <property type="match status" value="1"/>
</dbReference>
<dbReference type="SUPFAM" id="SSF64356">
    <property type="entry name" value="SNARE-like"/>
    <property type="match status" value="1"/>
</dbReference>
<dbReference type="PROSITE" id="PS00989">
    <property type="entry name" value="CLAT_ADAPTOR_S"/>
    <property type="match status" value="1"/>
</dbReference>
<gene>
    <name type="primary">AP1S2</name>
    <name type="ORF">DC22</name>
</gene>
<comment type="function">
    <text>Subunit of clathrin-associated adaptor protein complex 1 that plays a role in protein sorting in the late-Golgi/trans-Golgi network (TGN) and/or endosomes. The AP complexes mediate both the recruitment of clathrin to membranes and the recognition of sorting signals within the cytosolic tails of transmembrane cargo molecules.</text>
</comment>
<comment type="subunit">
    <text>Adaptor protein complex 1 (AP-1) is a heterotetramer composed of two large adaptins (gamma-type subunit AP1G1 and beta-type subunit AP1B1), a medium adaptin (mu-type subunit AP1M1 or AP1M2) and a small adaptin (sigma-type subunit AP1S1 or AP1S2 or AP1S3). Binds to MUC1.</text>
</comment>
<comment type="interaction">
    <interactant intactId="EBI-1054374">
        <id>P56377</id>
    </interactant>
    <interactant intactId="EBI-447609">
        <id>O43747</id>
        <label>AP1G1</label>
    </interactant>
    <organismsDiffer>false</organismsDiffer>
    <experiments>4</experiments>
</comment>
<comment type="interaction">
    <interactant intactId="EBI-1054374">
        <id>P56377</id>
    </interactant>
    <interactant intactId="EBI-10185819">
        <id>O43747-2</id>
        <label>AP1G1</label>
    </interactant>
    <organismsDiffer>false</organismsDiffer>
    <experiments>4</experiments>
</comment>
<comment type="interaction">
    <interactant intactId="EBI-1054374">
        <id>P56377</id>
    </interactant>
    <interactant intactId="EBI-6659161">
        <id>Q9Y586</id>
        <label>MAB21L2</label>
    </interactant>
    <organismsDiffer>false</organismsDiffer>
    <experiments>5</experiments>
</comment>
<comment type="subcellular location">
    <subcellularLocation>
        <location>Golgi apparatus</location>
    </subcellularLocation>
    <subcellularLocation>
        <location>Cytoplasmic vesicle membrane</location>
        <topology>Peripheral membrane protein</topology>
        <orientation>Cytoplasmic side</orientation>
    </subcellularLocation>
    <subcellularLocation>
        <location>Membrane</location>
        <location>Clathrin-coated pit</location>
    </subcellularLocation>
    <text>Component of the coat surrounding the cytoplasmic face of coated vesicles located at the Golgi complex.</text>
</comment>
<comment type="alternative products">
    <event type="alternative splicing"/>
    <isoform>
        <id>P56377-1</id>
        <name>1</name>
        <sequence type="displayed"/>
    </isoform>
    <isoform>
        <id>P56377-2</id>
        <name>2</name>
        <sequence type="described" ref="VSP_053671 VSP_053672"/>
    </isoform>
</comment>
<comment type="tissue specificity">
    <text>Widely expressed.</text>
</comment>
<comment type="disease" evidence="1">
    <disease id="DI-04207">
        <name>Pettigrew syndrome</name>
        <acronym>PGS</acronym>
        <description>An X-linked syndrome characterized by intellectual disability and additional highly variable features, including choreoathetosis, hydrocephalus, Dandy-Walker malformation, seizures, and iron or calcium deposition in the brain. Intellectual disability is characterized by significantly below average general intellectual functioning associated with impairments in adaptive behavior and manifested during the developmental period.</description>
        <dbReference type="MIM" id="304340"/>
    </disease>
    <text>The disease is caused by variants affecting the gene represented in this entry.</text>
</comment>
<comment type="similarity">
    <text evidence="3">Belongs to the adaptor complexes small subunit family.</text>
</comment>
<comment type="sequence caution" evidence="3">
    <conflict type="erroneous initiation">
        <sequence resource="EMBL-CDS" id="AAG44595"/>
    </conflict>
    <text>Extended N-terminus.</text>
</comment>
<feature type="chain" id="PRO_0000193799" description="AP-1 complex subunit sigma-2">
    <location>
        <begin position="1"/>
        <end position="157"/>
    </location>
</feature>
<feature type="splice variant" id="VSP_053671" description="In isoform 2." evidence="2">
    <original>M</original>
    <variation>MPAGCPPHSTTASLPQHGDRGFPFAAAAAAGQAPPRPRPAAAM</variation>
    <location>
        <position position="1"/>
    </location>
</feature>
<feature type="splice variant" id="VSP_053672" description="In isoform 2." evidence="2">
    <original>EAETPRSVLEEIGLT</original>
    <variation>KTETMYHSKSFIGFKKAY</variation>
    <location>
        <begin position="143"/>
        <end position="157"/>
    </location>
</feature>
<feature type="sequence conflict" description="In Ref. 2; AAG44595." evidence="3" ref="2">
    <original>M</original>
    <variation>L</variation>
    <location>
        <position position="1"/>
    </location>
</feature>
<feature type="sequence conflict" description="In Ref. 7; AAC72946." evidence="3" ref="7">
    <original>DQD</original>
    <variation>ESRN</variation>
    <location>
        <begin position="72"/>
        <end position="74"/>
    </location>
</feature>
<feature type="sequence conflict" description="In Ref. 7; AAC72946." evidence="3" ref="7">
    <original>SVC</original>
    <variation>QCL</variation>
    <location>
        <begin position="96"/>
        <end position="98"/>
    </location>
</feature>
<feature type="sequence conflict" description="In Ref. 2; AAG44595." evidence="3" ref="2">
    <original>E</original>
    <variation>EE</variation>
    <location>
        <position position="143"/>
    </location>
</feature>
<evidence type="ECO:0000269" key="1">
    <source>
    </source>
</evidence>
<evidence type="ECO:0000303" key="2">
    <source>
    </source>
</evidence>
<evidence type="ECO:0000305" key="3"/>
<keyword id="KW-0025">Alternative splicing</keyword>
<keyword id="KW-0168">Coated pit</keyword>
<keyword id="KW-0968">Cytoplasmic vesicle</keyword>
<keyword id="KW-0333">Golgi apparatus</keyword>
<keyword id="KW-0991">Intellectual disability</keyword>
<keyword id="KW-0472">Membrane</keyword>
<keyword id="KW-0653">Protein transport</keyword>
<keyword id="KW-1267">Proteomics identification</keyword>
<keyword id="KW-1185">Reference proteome</keyword>
<keyword id="KW-0813">Transport</keyword>
<proteinExistence type="evidence at protein level"/>
<name>AP1S2_HUMAN</name>
<sequence length="157" mass="18615">MQFMLLFSRQGKLRLQKWYVPLSDKEKKKITRELVQTVLARKPKMCSFLEWRDLKIVYKRYASLYFCCAIEDQDNELITLEIIHRYVELLDKYFGSVCELDIIFNFEKAYFILDEFLLGGEVQETSKKNVLKAIEQADLLQEEAETPRSVLEEIGLT</sequence>
<protein>
    <recommendedName>
        <fullName>AP-1 complex subunit sigma-2</fullName>
    </recommendedName>
    <alternativeName>
        <fullName>Adaptor protein complex AP-1 subunit sigma-1B</fullName>
    </alternativeName>
    <alternativeName>
        <fullName>Adaptor-related protein complex 1 subunit sigma-1B</fullName>
    </alternativeName>
    <alternativeName>
        <fullName>Clathrin assembly protein complex 1 sigma-1B small chain</fullName>
    </alternativeName>
    <alternativeName>
        <fullName>Golgi adaptor HA1/AP1 adaptin sigma-1B subunit</fullName>
    </alternativeName>
    <alternativeName>
        <fullName>Sigma 1B subunit of AP-1 clathrin</fullName>
    </alternativeName>
    <alternativeName>
        <fullName>Sigma-adaptin 1B</fullName>
    </alternativeName>
    <alternativeName>
        <fullName>Sigma1B-adaptin</fullName>
    </alternativeName>
</protein>
<reference key="1">
    <citation type="journal article" date="1998" name="J. Biol. Chem.">
        <title>Identification and characterization of novel clathrin adaptor-related proteins.</title>
        <authorList>
            <person name="Takatsu H."/>
            <person name="Sakurai M."/>
            <person name="Shin H.-W."/>
            <person name="Murakami K."/>
            <person name="Nakayama K."/>
        </authorList>
    </citation>
    <scope>NUCLEOTIDE SEQUENCE [MRNA] (ISOFORM 1)</scope>
</reference>
<reference key="2">
    <citation type="submission" date="2000-05" db="EMBL/GenBank/DDBJ databases">
        <title>Novel genes expressed in human dendritic cell.</title>
        <authorList>
            <person name="Xu X."/>
            <person name="Yang Y."/>
            <person name="Gao G."/>
            <person name="Xiao H."/>
            <person name="Chen Z."/>
            <person name="Han Z."/>
        </authorList>
    </citation>
    <scope>NUCLEOTIDE SEQUENCE [LARGE SCALE MRNA] (ISOFORM 1)</scope>
    <source>
        <tissue>Dendritic cell</tissue>
    </source>
</reference>
<reference key="3">
    <citation type="submission" date="2003-05" db="EMBL/GenBank/DDBJ databases">
        <title>Cloning of human full-length CDSs in BD Creator(TM) system donor vector.</title>
        <authorList>
            <person name="Kalnine N."/>
            <person name="Chen X."/>
            <person name="Rolfs A."/>
            <person name="Halleck A."/>
            <person name="Hines L."/>
            <person name="Eisenstein S."/>
            <person name="Koundinya M."/>
            <person name="Raphael J."/>
            <person name="Moreira D."/>
            <person name="Kelley T."/>
            <person name="LaBaer J."/>
            <person name="Lin Y."/>
            <person name="Phelan M."/>
            <person name="Farmer A."/>
        </authorList>
    </citation>
    <scope>NUCLEOTIDE SEQUENCE [LARGE SCALE MRNA] (ISOFORM 1)</scope>
</reference>
<reference key="4">
    <citation type="journal article" date="2004" name="Nat. Genet.">
        <title>Complete sequencing and characterization of 21,243 full-length human cDNAs.</title>
        <authorList>
            <person name="Ota T."/>
            <person name="Suzuki Y."/>
            <person name="Nishikawa T."/>
            <person name="Otsuki T."/>
            <person name="Sugiyama T."/>
            <person name="Irie R."/>
            <person name="Wakamatsu A."/>
            <person name="Hayashi K."/>
            <person name="Sato H."/>
            <person name="Nagai K."/>
            <person name="Kimura K."/>
            <person name="Makita H."/>
            <person name="Sekine M."/>
            <person name="Obayashi M."/>
            <person name="Nishi T."/>
            <person name="Shibahara T."/>
            <person name="Tanaka T."/>
            <person name="Ishii S."/>
            <person name="Yamamoto J."/>
            <person name="Saito K."/>
            <person name="Kawai Y."/>
            <person name="Isono Y."/>
            <person name="Nakamura Y."/>
            <person name="Nagahari K."/>
            <person name="Murakami K."/>
            <person name="Yasuda T."/>
            <person name="Iwayanagi T."/>
            <person name="Wagatsuma M."/>
            <person name="Shiratori A."/>
            <person name="Sudo H."/>
            <person name="Hosoiri T."/>
            <person name="Kaku Y."/>
            <person name="Kodaira H."/>
            <person name="Kondo H."/>
            <person name="Sugawara M."/>
            <person name="Takahashi M."/>
            <person name="Kanda K."/>
            <person name="Yokoi T."/>
            <person name="Furuya T."/>
            <person name="Kikkawa E."/>
            <person name="Omura Y."/>
            <person name="Abe K."/>
            <person name="Kamihara K."/>
            <person name="Katsuta N."/>
            <person name="Sato K."/>
            <person name="Tanikawa M."/>
            <person name="Yamazaki M."/>
            <person name="Ninomiya K."/>
            <person name="Ishibashi T."/>
            <person name="Yamashita H."/>
            <person name="Murakawa K."/>
            <person name="Fujimori K."/>
            <person name="Tanai H."/>
            <person name="Kimata M."/>
            <person name="Watanabe M."/>
            <person name="Hiraoka S."/>
            <person name="Chiba Y."/>
            <person name="Ishida S."/>
            <person name="Ono Y."/>
            <person name="Takiguchi S."/>
            <person name="Watanabe S."/>
            <person name="Yosida M."/>
            <person name="Hotuta T."/>
            <person name="Kusano J."/>
            <person name="Kanehori K."/>
            <person name="Takahashi-Fujii A."/>
            <person name="Hara H."/>
            <person name="Tanase T.-O."/>
            <person name="Nomura Y."/>
            <person name="Togiya S."/>
            <person name="Komai F."/>
            <person name="Hara R."/>
            <person name="Takeuchi K."/>
            <person name="Arita M."/>
            <person name="Imose N."/>
            <person name="Musashino K."/>
            <person name="Yuuki H."/>
            <person name="Oshima A."/>
            <person name="Sasaki N."/>
            <person name="Aotsuka S."/>
            <person name="Yoshikawa Y."/>
            <person name="Matsunawa H."/>
            <person name="Ichihara T."/>
            <person name="Shiohata N."/>
            <person name="Sano S."/>
            <person name="Moriya S."/>
            <person name="Momiyama H."/>
            <person name="Satoh N."/>
            <person name="Takami S."/>
            <person name="Terashima Y."/>
            <person name="Suzuki O."/>
            <person name="Nakagawa S."/>
            <person name="Senoh A."/>
            <person name="Mizoguchi H."/>
            <person name="Goto Y."/>
            <person name="Shimizu F."/>
            <person name="Wakebe H."/>
            <person name="Hishigaki H."/>
            <person name="Watanabe T."/>
            <person name="Sugiyama A."/>
            <person name="Takemoto M."/>
            <person name="Kawakami B."/>
            <person name="Yamazaki M."/>
            <person name="Watanabe K."/>
            <person name="Kumagai A."/>
            <person name="Itakura S."/>
            <person name="Fukuzumi Y."/>
            <person name="Fujimori Y."/>
            <person name="Komiyama M."/>
            <person name="Tashiro H."/>
            <person name="Tanigami A."/>
            <person name="Fujiwara T."/>
            <person name="Ono T."/>
            <person name="Yamada K."/>
            <person name="Fujii Y."/>
            <person name="Ozaki K."/>
            <person name="Hirao M."/>
            <person name="Ohmori Y."/>
            <person name="Kawabata A."/>
            <person name="Hikiji T."/>
            <person name="Kobatake N."/>
            <person name="Inagaki H."/>
            <person name="Ikema Y."/>
            <person name="Okamoto S."/>
            <person name="Okitani R."/>
            <person name="Kawakami T."/>
            <person name="Noguchi S."/>
            <person name="Itoh T."/>
            <person name="Shigeta K."/>
            <person name="Senba T."/>
            <person name="Matsumura K."/>
            <person name="Nakajima Y."/>
            <person name="Mizuno T."/>
            <person name="Morinaga M."/>
            <person name="Sasaki M."/>
            <person name="Togashi T."/>
            <person name="Oyama M."/>
            <person name="Hata H."/>
            <person name="Watanabe M."/>
            <person name="Komatsu T."/>
            <person name="Mizushima-Sugano J."/>
            <person name="Satoh T."/>
            <person name="Shirai Y."/>
            <person name="Takahashi Y."/>
            <person name="Nakagawa K."/>
            <person name="Okumura K."/>
            <person name="Nagase T."/>
            <person name="Nomura N."/>
            <person name="Kikuchi H."/>
            <person name="Masuho Y."/>
            <person name="Yamashita R."/>
            <person name="Nakai K."/>
            <person name="Yada T."/>
            <person name="Nakamura Y."/>
            <person name="Ohara O."/>
            <person name="Isogai T."/>
            <person name="Sugano S."/>
        </authorList>
    </citation>
    <scope>NUCLEOTIDE SEQUENCE [LARGE SCALE MRNA] (ISOFORM 2)</scope>
    <source>
        <tissue>Brain</tissue>
    </source>
</reference>
<reference key="5">
    <citation type="journal article" date="2005" name="Nature">
        <title>The DNA sequence of the human X chromosome.</title>
        <authorList>
            <person name="Ross M.T."/>
            <person name="Grafham D.V."/>
            <person name="Coffey A.J."/>
            <person name="Scherer S."/>
            <person name="McLay K."/>
            <person name="Muzny D."/>
            <person name="Platzer M."/>
            <person name="Howell G.R."/>
            <person name="Burrows C."/>
            <person name="Bird C.P."/>
            <person name="Frankish A."/>
            <person name="Lovell F.L."/>
            <person name="Howe K.L."/>
            <person name="Ashurst J.L."/>
            <person name="Fulton R.S."/>
            <person name="Sudbrak R."/>
            <person name="Wen G."/>
            <person name="Jones M.C."/>
            <person name="Hurles M.E."/>
            <person name="Andrews T.D."/>
            <person name="Scott C.E."/>
            <person name="Searle S."/>
            <person name="Ramser J."/>
            <person name="Whittaker A."/>
            <person name="Deadman R."/>
            <person name="Carter N.P."/>
            <person name="Hunt S.E."/>
            <person name="Chen R."/>
            <person name="Cree A."/>
            <person name="Gunaratne P."/>
            <person name="Havlak P."/>
            <person name="Hodgson A."/>
            <person name="Metzker M.L."/>
            <person name="Richards S."/>
            <person name="Scott G."/>
            <person name="Steffen D."/>
            <person name="Sodergren E."/>
            <person name="Wheeler D.A."/>
            <person name="Worley K.C."/>
            <person name="Ainscough R."/>
            <person name="Ambrose K.D."/>
            <person name="Ansari-Lari M.A."/>
            <person name="Aradhya S."/>
            <person name="Ashwell R.I."/>
            <person name="Babbage A.K."/>
            <person name="Bagguley C.L."/>
            <person name="Ballabio A."/>
            <person name="Banerjee R."/>
            <person name="Barker G.E."/>
            <person name="Barlow K.F."/>
            <person name="Barrett I.P."/>
            <person name="Bates K.N."/>
            <person name="Beare D.M."/>
            <person name="Beasley H."/>
            <person name="Beasley O."/>
            <person name="Beck A."/>
            <person name="Bethel G."/>
            <person name="Blechschmidt K."/>
            <person name="Brady N."/>
            <person name="Bray-Allen S."/>
            <person name="Bridgeman A.M."/>
            <person name="Brown A.J."/>
            <person name="Brown M.J."/>
            <person name="Bonnin D."/>
            <person name="Bruford E.A."/>
            <person name="Buhay C."/>
            <person name="Burch P."/>
            <person name="Burford D."/>
            <person name="Burgess J."/>
            <person name="Burrill W."/>
            <person name="Burton J."/>
            <person name="Bye J.M."/>
            <person name="Carder C."/>
            <person name="Carrel L."/>
            <person name="Chako J."/>
            <person name="Chapman J.C."/>
            <person name="Chavez D."/>
            <person name="Chen E."/>
            <person name="Chen G."/>
            <person name="Chen Y."/>
            <person name="Chen Z."/>
            <person name="Chinault C."/>
            <person name="Ciccodicola A."/>
            <person name="Clark S.Y."/>
            <person name="Clarke G."/>
            <person name="Clee C.M."/>
            <person name="Clegg S."/>
            <person name="Clerc-Blankenburg K."/>
            <person name="Clifford K."/>
            <person name="Cobley V."/>
            <person name="Cole C.G."/>
            <person name="Conquer J.S."/>
            <person name="Corby N."/>
            <person name="Connor R.E."/>
            <person name="David R."/>
            <person name="Davies J."/>
            <person name="Davis C."/>
            <person name="Davis J."/>
            <person name="Delgado O."/>
            <person name="Deshazo D."/>
            <person name="Dhami P."/>
            <person name="Ding Y."/>
            <person name="Dinh H."/>
            <person name="Dodsworth S."/>
            <person name="Draper H."/>
            <person name="Dugan-Rocha S."/>
            <person name="Dunham A."/>
            <person name="Dunn M."/>
            <person name="Durbin K.J."/>
            <person name="Dutta I."/>
            <person name="Eades T."/>
            <person name="Ellwood M."/>
            <person name="Emery-Cohen A."/>
            <person name="Errington H."/>
            <person name="Evans K.L."/>
            <person name="Faulkner L."/>
            <person name="Francis F."/>
            <person name="Frankland J."/>
            <person name="Fraser A.E."/>
            <person name="Galgoczy P."/>
            <person name="Gilbert J."/>
            <person name="Gill R."/>
            <person name="Gloeckner G."/>
            <person name="Gregory S.G."/>
            <person name="Gribble S."/>
            <person name="Griffiths C."/>
            <person name="Grocock R."/>
            <person name="Gu Y."/>
            <person name="Gwilliam R."/>
            <person name="Hamilton C."/>
            <person name="Hart E.A."/>
            <person name="Hawes A."/>
            <person name="Heath P.D."/>
            <person name="Heitmann K."/>
            <person name="Hennig S."/>
            <person name="Hernandez J."/>
            <person name="Hinzmann B."/>
            <person name="Ho S."/>
            <person name="Hoffs M."/>
            <person name="Howden P.J."/>
            <person name="Huckle E.J."/>
            <person name="Hume J."/>
            <person name="Hunt P.J."/>
            <person name="Hunt A.R."/>
            <person name="Isherwood J."/>
            <person name="Jacob L."/>
            <person name="Johnson D."/>
            <person name="Jones S."/>
            <person name="de Jong P.J."/>
            <person name="Joseph S.S."/>
            <person name="Keenan S."/>
            <person name="Kelly S."/>
            <person name="Kershaw J.K."/>
            <person name="Khan Z."/>
            <person name="Kioschis P."/>
            <person name="Klages S."/>
            <person name="Knights A.J."/>
            <person name="Kosiura A."/>
            <person name="Kovar-Smith C."/>
            <person name="Laird G.K."/>
            <person name="Langford C."/>
            <person name="Lawlor S."/>
            <person name="Leversha M."/>
            <person name="Lewis L."/>
            <person name="Liu W."/>
            <person name="Lloyd C."/>
            <person name="Lloyd D.M."/>
            <person name="Loulseged H."/>
            <person name="Loveland J.E."/>
            <person name="Lovell J.D."/>
            <person name="Lozado R."/>
            <person name="Lu J."/>
            <person name="Lyne R."/>
            <person name="Ma J."/>
            <person name="Maheshwari M."/>
            <person name="Matthews L.H."/>
            <person name="McDowall J."/>
            <person name="McLaren S."/>
            <person name="McMurray A."/>
            <person name="Meidl P."/>
            <person name="Meitinger T."/>
            <person name="Milne S."/>
            <person name="Miner G."/>
            <person name="Mistry S.L."/>
            <person name="Morgan M."/>
            <person name="Morris S."/>
            <person name="Mueller I."/>
            <person name="Mullikin J.C."/>
            <person name="Nguyen N."/>
            <person name="Nordsiek G."/>
            <person name="Nyakatura G."/>
            <person name="O'dell C.N."/>
            <person name="Okwuonu G."/>
            <person name="Palmer S."/>
            <person name="Pandian R."/>
            <person name="Parker D."/>
            <person name="Parrish J."/>
            <person name="Pasternak S."/>
            <person name="Patel D."/>
            <person name="Pearce A.V."/>
            <person name="Pearson D.M."/>
            <person name="Pelan S.E."/>
            <person name="Perez L."/>
            <person name="Porter K.M."/>
            <person name="Ramsey Y."/>
            <person name="Reichwald K."/>
            <person name="Rhodes S."/>
            <person name="Ridler K.A."/>
            <person name="Schlessinger D."/>
            <person name="Schueler M.G."/>
            <person name="Sehra H.K."/>
            <person name="Shaw-Smith C."/>
            <person name="Shen H."/>
            <person name="Sheridan E.M."/>
            <person name="Shownkeen R."/>
            <person name="Skuce C.D."/>
            <person name="Smith M.L."/>
            <person name="Sotheran E.C."/>
            <person name="Steingruber H.E."/>
            <person name="Steward C.A."/>
            <person name="Storey R."/>
            <person name="Swann R.M."/>
            <person name="Swarbreck D."/>
            <person name="Tabor P.E."/>
            <person name="Taudien S."/>
            <person name="Taylor T."/>
            <person name="Teague B."/>
            <person name="Thomas K."/>
            <person name="Thorpe A."/>
            <person name="Timms K."/>
            <person name="Tracey A."/>
            <person name="Trevanion S."/>
            <person name="Tromans A.C."/>
            <person name="d'Urso M."/>
            <person name="Verduzco D."/>
            <person name="Villasana D."/>
            <person name="Waldron L."/>
            <person name="Wall M."/>
            <person name="Wang Q."/>
            <person name="Warren J."/>
            <person name="Warry G.L."/>
            <person name="Wei X."/>
            <person name="West A."/>
            <person name="Whitehead S.L."/>
            <person name="Whiteley M.N."/>
            <person name="Wilkinson J.E."/>
            <person name="Willey D.L."/>
            <person name="Williams G."/>
            <person name="Williams L."/>
            <person name="Williamson A."/>
            <person name="Williamson H."/>
            <person name="Wilming L."/>
            <person name="Woodmansey R.L."/>
            <person name="Wray P.W."/>
            <person name="Yen J."/>
            <person name="Zhang J."/>
            <person name="Zhou J."/>
            <person name="Zoghbi H."/>
            <person name="Zorilla S."/>
            <person name="Buck D."/>
            <person name="Reinhardt R."/>
            <person name="Poustka A."/>
            <person name="Rosenthal A."/>
            <person name="Lehrach H."/>
            <person name="Meindl A."/>
            <person name="Minx P.J."/>
            <person name="Hillier L.W."/>
            <person name="Willard H.F."/>
            <person name="Wilson R.K."/>
            <person name="Waterston R.H."/>
            <person name="Rice C.M."/>
            <person name="Vaudin M."/>
            <person name="Coulson A."/>
            <person name="Nelson D.L."/>
            <person name="Weinstock G."/>
            <person name="Sulston J.E."/>
            <person name="Durbin R.M."/>
            <person name="Hubbard T."/>
            <person name="Gibbs R.A."/>
            <person name="Beck S."/>
            <person name="Rogers J."/>
            <person name="Bentley D.R."/>
        </authorList>
    </citation>
    <scope>NUCLEOTIDE SEQUENCE [LARGE SCALE GENOMIC DNA]</scope>
</reference>
<reference key="6">
    <citation type="journal article" date="2004" name="Genome Res.">
        <title>The status, quality, and expansion of the NIH full-length cDNA project: the Mammalian Gene Collection (MGC).</title>
        <authorList>
            <consortium name="The MGC Project Team"/>
        </authorList>
    </citation>
    <scope>NUCLEOTIDE SEQUENCE [LARGE SCALE MRNA] (ISOFORM 1)</scope>
    <source>
        <tissue>Skin</tissue>
        <tissue>Uterus</tissue>
    </source>
</reference>
<reference key="7">
    <citation type="submission" date="1998-08" db="EMBL/GenBank/DDBJ databases">
        <title>Full-insert sequence of mapped XREF EST.</title>
        <authorList>
            <person name="Barrow I.K.-P."/>
            <person name="Boguski M.S."/>
            <person name="Touchman J.W."/>
            <person name="Spencer F."/>
        </authorList>
    </citation>
    <scope>NUCLEOTIDE SEQUENCE [LARGE SCALE MRNA] OF 1-98 (ISOFORM 1)</scope>
</reference>
<reference key="8">
    <citation type="journal article" date="2004" name="J. Biol. Chem.">
        <title>MUC1 membrane trafficking is modulated by multiple interactions.</title>
        <authorList>
            <person name="Kinlough C.L."/>
            <person name="Poland P.A."/>
            <person name="Bruns J.B."/>
            <person name="Harkleroad K.L."/>
            <person name="Hughey R.P."/>
        </authorList>
    </citation>
    <scope>INTERACTION WITH MUC1</scope>
</reference>
<reference key="9">
    <citation type="journal article" date="2006" name="Am. J. Hum. Genet.">
        <title>Mutations in the gene encoding the sigma 2 subunit of the adaptor protein 1 complex, AP1S2, cause X-linked mental retardation.</title>
        <authorList>
            <person name="Tarpey P.S."/>
            <person name="Stevens C."/>
            <person name="Teague J."/>
            <person name="Edkins S."/>
            <person name="O'Meara S."/>
            <person name="Avis T."/>
            <person name="Barthorpe S."/>
            <person name="Buck G."/>
            <person name="Butler A."/>
            <person name="Cole J."/>
            <person name="Dicks E."/>
            <person name="Gray K."/>
            <person name="Halliday K."/>
            <person name="Harrison R."/>
            <person name="Hills K."/>
            <person name="Hinton J."/>
            <person name="Jones D."/>
            <person name="Menzies A."/>
            <person name="Mironenko T."/>
            <person name="Perry J."/>
            <person name="Raine K."/>
            <person name="Richardson D."/>
            <person name="Shepherd R."/>
            <person name="Small A."/>
            <person name="Tofts C."/>
            <person name="Varian J."/>
            <person name="West S."/>
            <person name="Widaa S."/>
            <person name="Yates A."/>
            <person name="Catford R."/>
            <person name="Butler J."/>
            <person name="Mallya U."/>
            <person name="Moon J."/>
            <person name="Luo Y."/>
            <person name="Dorkins H."/>
            <person name="Thompson D."/>
            <person name="Easton D.F."/>
            <person name="Wooster R."/>
            <person name="Bobrow M."/>
            <person name="Carpenter N."/>
            <person name="Simensen R.J."/>
            <person name="Schwartz C.E."/>
            <person name="Stevenson R.E."/>
            <person name="Turner G."/>
            <person name="Partington M."/>
            <person name="Gecz J."/>
            <person name="Stratton M.R."/>
            <person name="Futreal P.A."/>
            <person name="Raymond F.L."/>
        </authorList>
    </citation>
    <scope>INVOLVEMENT IN PGS</scope>
</reference>
<reference key="10">
    <citation type="journal article" date="2011" name="BMC Syst. Biol.">
        <title>Initial characterization of the human central proteome.</title>
        <authorList>
            <person name="Burkard T.R."/>
            <person name="Planyavsky M."/>
            <person name="Kaupe I."/>
            <person name="Breitwieser F.P."/>
            <person name="Buerckstuemmer T."/>
            <person name="Bennett K.L."/>
            <person name="Superti-Furga G."/>
            <person name="Colinge J."/>
        </authorList>
    </citation>
    <scope>IDENTIFICATION BY MASS SPECTROMETRY [LARGE SCALE ANALYSIS]</scope>
</reference>
<accession>P56377</accession>
<accession>B4DSU4</accession>
<accession>O95326</accession>
<accession>Q9H2N6</accession>